<reference key="1">
    <citation type="journal article" date="2000" name="Nature">
        <title>Sequence and analysis of chromosome 1 of the plant Arabidopsis thaliana.</title>
        <authorList>
            <person name="Theologis A."/>
            <person name="Ecker J.R."/>
            <person name="Palm C.J."/>
            <person name="Federspiel N.A."/>
            <person name="Kaul S."/>
            <person name="White O."/>
            <person name="Alonso J."/>
            <person name="Altafi H."/>
            <person name="Araujo R."/>
            <person name="Bowman C.L."/>
            <person name="Brooks S.Y."/>
            <person name="Buehler E."/>
            <person name="Chan A."/>
            <person name="Chao Q."/>
            <person name="Chen H."/>
            <person name="Cheuk R.F."/>
            <person name="Chin C.W."/>
            <person name="Chung M.K."/>
            <person name="Conn L."/>
            <person name="Conway A.B."/>
            <person name="Conway A.R."/>
            <person name="Creasy T.H."/>
            <person name="Dewar K."/>
            <person name="Dunn P."/>
            <person name="Etgu P."/>
            <person name="Feldblyum T.V."/>
            <person name="Feng J.-D."/>
            <person name="Fong B."/>
            <person name="Fujii C.Y."/>
            <person name="Gill J.E."/>
            <person name="Goldsmith A.D."/>
            <person name="Haas B."/>
            <person name="Hansen N.F."/>
            <person name="Hughes B."/>
            <person name="Huizar L."/>
            <person name="Hunter J.L."/>
            <person name="Jenkins J."/>
            <person name="Johnson-Hopson C."/>
            <person name="Khan S."/>
            <person name="Khaykin E."/>
            <person name="Kim C.J."/>
            <person name="Koo H.L."/>
            <person name="Kremenetskaia I."/>
            <person name="Kurtz D.B."/>
            <person name="Kwan A."/>
            <person name="Lam B."/>
            <person name="Langin-Hooper S."/>
            <person name="Lee A."/>
            <person name="Lee J.M."/>
            <person name="Lenz C.A."/>
            <person name="Li J.H."/>
            <person name="Li Y.-P."/>
            <person name="Lin X."/>
            <person name="Liu S.X."/>
            <person name="Liu Z.A."/>
            <person name="Luros J.S."/>
            <person name="Maiti R."/>
            <person name="Marziali A."/>
            <person name="Militscher J."/>
            <person name="Miranda M."/>
            <person name="Nguyen M."/>
            <person name="Nierman W.C."/>
            <person name="Osborne B.I."/>
            <person name="Pai G."/>
            <person name="Peterson J."/>
            <person name="Pham P.K."/>
            <person name="Rizzo M."/>
            <person name="Rooney T."/>
            <person name="Rowley D."/>
            <person name="Sakano H."/>
            <person name="Salzberg S.L."/>
            <person name="Schwartz J.R."/>
            <person name="Shinn P."/>
            <person name="Southwick A.M."/>
            <person name="Sun H."/>
            <person name="Tallon L.J."/>
            <person name="Tambunga G."/>
            <person name="Toriumi M.J."/>
            <person name="Town C.D."/>
            <person name="Utterback T."/>
            <person name="Van Aken S."/>
            <person name="Vaysberg M."/>
            <person name="Vysotskaia V.S."/>
            <person name="Walker M."/>
            <person name="Wu D."/>
            <person name="Yu G."/>
            <person name="Fraser C.M."/>
            <person name="Venter J.C."/>
            <person name="Davis R.W."/>
        </authorList>
    </citation>
    <scope>NUCLEOTIDE SEQUENCE [LARGE SCALE GENOMIC DNA]</scope>
    <source>
        <strain>cv. Columbia</strain>
    </source>
</reference>
<reference key="2">
    <citation type="journal article" date="2017" name="Plant J.">
        <title>Araport11: a complete reannotation of the Arabidopsis thaliana reference genome.</title>
        <authorList>
            <person name="Cheng C.Y."/>
            <person name="Krishnakumar V."/>
            <person name="Chan A.P."/>
            <person name="Thibaud-Nissen F."/>
            <person name="Schobel S."/>
            <person name="Town C.D."/>
        </authorList>
    </citation>
    <scope>GENOME REANNOTATION</scope>
    <source>
        <strain>cv. Columbia</strain>
    </source>
</reference>
<reference key="3">
    <citation type="journal article" date="2009" name="DNA Res.">
        <title>Analysis of multiple occurrences of alternative splicing events in Arabidopsis thaliana using novel sequenced full-length cDNAs.</title>
        <authorList>
            <person name="Iida K."/>
            <person name="Fukami-Kobayashi K."/>
            <person name="Toyoda A."/>
            <person name="Sakaki Y."/>
            <person name="Kobayashi M."/>
            <person name="Seki M."/>
            <person name="Shinozaki K."/>
        </authorList>
    </citation>
    <scope>NUCLEOTIDE SEQUENCE [LARGE SCALE MRNA] (ISOFORM 2)</scope>
    <source>
        <strain>cv. Columbia</strain>
        <tissue>Root</tissue>
    </source>
</reference>
<reference key="4">
    <citation type="submission" date="2006-12" db="EMBL/GenBank/DDBJ databases">
        <title>Arabidopsis ORF clones.</title>
        <authorList>
            <person name="Bautista V.R."/>
            <person name="Kim C.J."/>
            <person name="Chen H."/>
            <person name="Wu S.Y."/>
            <person name="De Los Reyes C."/>
            <person name="Ecker J.R."/>
        </authorList>
    </citation>
    <scope>NUCLEOTIDE SEQUENCE [LARGE SCALE MRNA] (ISOFORM 3)</scope>
    <source>
        <strain>cv. Columbia</strain>
    </source>
</reference>
<reference key="5">
    <citation type="journal article" date="2004" name="Genome Res.">
        <title>Whole genome sequence comparisons and 'full-length' cDNA sequences: a combined approach to evaluate and improve Arabidopsis genome annotation.</title>
        <authorList>
            <person name="Castelli V."/>
            <person name="Aury J.-M."/>
            <person name="Jaillon O."/>
            <person name="Wincker P."/>
            <person name="Clepet C."/>
            <person name="Menard M."/>
            <person name="Cruaud C."/>
            <person name="Quetier F."/>
            <person name="Scarpelli C."/>
            <person name="Schaechter V."/>
            <person name="Temple G."/>
            <person name="Caboche M."/>
            <person name="Weissenbach J."/>
            <person name="Salanoubat M."/>
        </authorList>
    </citation>
    <scope>NUCLEOTIDE SEQUENCE [LARGE SCALE MRNA] OF 13-663 (ISOFORM 1)</scope>
    <source>
        <strain>cv. Columbia</strain>
    </source>
</reference>
<keyword id="KW-0025">Alternative splicing</keyword>
<keyword id="KW-0067">ATP-binding</keyword>
<keyword id="KW-1003">Cell membrane</keyword>
<keyword id="KW-0325">Glycoprotein</keyword>
<keyword id="KW-0418">Kinase</keyword>
<keyword id="KW-0472">Membrane</keyword>
<keyword id="KW-0547">Nucleotide-binding</keyword>
<keyword id="KW-1185">Reference proteome</keyword>
<keyword id="KW-0723">Serine/threonine-protein kinase</keyword>
<keyword id="KW-0732">Signal</keyword>
<keyword id="KW-0808">Transferase</keyword>
<keyword id="KW-0812">Transmembrane</keyword>
<keyword id="KW-1133">Transmembrane helix</keyword>
<organism>
    <name type="scientific">Arabidopsis thaliana</name>
    <name type="common">Mouse-ear cress</name>
    <dbReference type="NCBI Taxonomy" id="3702"/>
    <lineage>
        <taxon>Eukaryota</taxon>
        <taxon>Viridiplantae</taxon>
        <taxon>Streptophyta</taxon>
        <taxon>Embryophyta</taxon>
        <taxon>Tracheophyta</taxon>
        <taxon>Spermatophyta</taxon>
        <taxon>Magnoliopsida</taxon>
        <taxon>eudicotyledons</taxon>
        <taxon>Gunneridae</taxon>
        <taxon>Pentapetalae</taxon>
        <taxon>rosids</taxon>
        <taxon>malvids</taxon>
        <taxon>Brassicales</taxon>
        <taxon>Brassicaceae</taxon>
        <taxon>Camelineae</taxon>
        <taxon>Arabidopsis</taxon>
    </lineage>
</organism>
<proteinExistence type="evidence at transcript level"/>
<gene>
    <name type="ordered locus">At1g49730</name>
    <name type="ORF">F14J22.6</name>
</gene>
<sequence>MVVNSQAFLLALIALLATQLPSLMAADCPLDFSGSNFTLVATVCSNITNRGKCCRYMNAFVAVSVARYANLSTNLGVTSDLSETCIASISRAMEGYGVSRNATSFCGLGTKILVKYDCDGRTTVTQMHQSPGFGHVSRNCRLPFSPGHQCRKCLNSGITYLRNLIGAETNNITLCTCRDATYATLASRIDDTSALELLSCFFQVTELNIPSESFSPVASPEPSPSTVGGISPSNSDSQMTTSRSTNPYHLTMVPTIGIVVTAVALTMLVVLVILIRRKNRELDESESLDRKSTKSVPSSLPVFKIHEDDSSSAFRKFSYKEMTNATNDFNTVIGQGGFGTVYKAEFNDGLIAAVKKMNKVSEQAEQDFCREIGLLAKLHHRNLVALKGFCINKKERFLVYDYMKNGSLKDHLHAIGKPPPSWGTRMKIAIDVANALEYLHFYCDPPLCHRDIKSSNILLDENFVAKLSDFGLAHSSRDGSVCFEPVNTDIRGTPGYVDPEYVVTQELTEKSDVYSYGVVLLELITGRRAVDEGRNLVEMSQRFLLAKSKHLELVDPRIKDSINDAGGKQLDAVVTVVRLCTEKEGRSRPSIKQVLRLLCESCDPVHSAFAKAVEEEIGWDSRKRSNLRIQRGDSRIFGPSSSTTSRSHYSRSLPHSPINGFSF</sequence>
<feature type="signal peptide" evidence="2">
    <location>
        <begin position="1"/>
        <end position="25"/>
    </location>
</feature>
<feature type="chain" id="PRO_0000401338" description="Probable receptor-like protein kinase At1g49730">
    <location>
        <begin position="26"/>
        <end position="663"/>
    </location>
</feature>
<feature type="topological domain" description="Extracellular" evidence="2">
    <location>
        <begin position="26"/>
        <end position="254"/>
    </location>
</feature>
<feature type="transmembrane region" description="Helical" evidence="2">
    <location>
        <begin position="255"/>
        <end position="275"/>
    </location>
</feature>
<feature type="topological domain" description="Cytoplasmic" evidence="2">
    <location>
        <begin position="276"/>
        <end position="663"/>
    </location>
</feature>
<feature type="domain" description="Protein kinase" evidence="3">
    <location>
        <begin position="327"/>
        <end position="609"/>
    </location>
</feature>
<feature type="region of interest" description="Disordered" evidence="5">
    <location>
        <begin position="213"/>
        <end position="243"/>
    </location>
</feature>
<feature type="region of interest" description="Disordered" evidence="5">
    <location>
        <begin position="631"/>
        <end position="663"/>
    </location>
</feature>
<feature type="compositionally biased region" description="Polar residues" evidence="5">
    <location>
        <begin position="224"/>
        <end position="243"/>
    </location>
</feature>
<feature type="compositionally biased region" description="Low complexity" evidence="5">
    <location>
        <begin position="640"/>
        <end position="652"/>
    </location>
</feature>
<feature type="active site" description="Proton acceptor" evidence="3 4">
    <location>
        <position position="451"/>
    </location>
</feature>
<feature type="binding site" evidence="3">
    <location>
        <begin position="333"/>
        <end position="341"/>
    </location>
    <ligand>
        <name>ATP</name>
        <dbReference type="ChEBI" id="CHEBI:30616"/>
    </ligand>
</feature>
<feature type="binding site" evidence="3">
    <location>
        <position position="355"/>
    </location>
    <ligand>
        <name>ATP</name>
        <dbReference type="ChEBI" id="CHEBI:30616"/>
    </ligand>
</feature>
<feature type="glycosylation site" description="N-linked (GlcNAc...) asparagine" evidence="2">
    <location>
        <position position="36"/>
    </location>
</feature>
<feature type="glycosylation site" description="N-linked (GlcNAc...) asparagine" evidence="2">
    <location>
        <position position="46"/>
    </location>
</feature>
<feature type="glycosylation site" description="N-linked (GlcNAc...) asparagine" evidence="2">
    <location>
        <position position="70"/>
    </location>
</feature>
<feature type="glycosylation site" description="N-linked (GlcNAc...) asparagine" evidence="2">
    <location>
        <position position="101"/>
    </location>
</feature>
<feature type="glycosylation site" description="N-linked (GlcNAc...) asparagine" evidence="2">
    <location>
        <position position="171"/>
    </location>
</feature>
<feature type="splice variant" id="VSP_040162" description="In isoform 3." evidence="7">
    <location>
        <begin position="1"/>
        <end position="56"/>
    </location>
</feature>
<feature type="splice variant" id="VSP_040163" description="In isoform 3 and isoform 4." evidence="7">
    <original>LEYLHFYCDPPLCHR</original>
    <variation>LVNIPKSFIYIFSVN</variation>
    <location>
        <begin position="436"/>
        <end position="450"/>
    </location>
</feature>
<feature type="splice variant" id="VSP_040164" description="In isoform 3 and isoform 4." evidence="7">
    <location>
        <begin position="451"/>
        <end position="663"/>
    </location>
</feature>
<feature type="splice variant" id="VSP_040165" description="In isoform 2." evidence="6">
    <location>
        <begin position="533"/>
        <end position="572"/>
    </location>
</feature>
<name>Y1497_ARATH</name>
<accession>Q9FX99</accession>
<accession>Q2V4H6</accession>
<accession>Q3ECT5</accession>
<accession>Q3ECT6</accession>
<comment type="catalytic activity">
    <reaction>
        <text>L-seryl-[protein] + ATP = O-phospho-L-seryl-[protein] + ADP + H(+)</text>
        <dbReference type="Rhea" id="RHEA:17989"/>
        <dbReference type="Rhea" id="RHEA-COMP:9863"/>
        <dbReference type="Rhea" id="RHEA-COMP:11604"/>
        <dbReference type="ChEBI" id="CHEBI:15378"/>
        <dbReference type="ChEBI" id="CHEBI:29999"/>
        <dbReference type="ChEBI" id="CHEBI:30616"/>
        <dbReference type="ChEBI" id="CHEBI:83421"/>
        <dbReference type="ChEBI" id="CHEBI:456216"/>
        <dbReference type="EC" id="2.7.11.1"/>
    </reaction>
</comment>
<comment type="catalytic activity">
    <reaction>
        <text>L-threonyl-[protein] + ATP = O-phospho-L-threonyl-[protein] + ADP + H(+)</text>
        <dbReference type="Rhea" id="RHEA:46608"/>
        <dbReference type="Rhea" id="RHEA-COMP:11060"/>
        <dbReference type="Rhea" id="RHEA-COMP:11605"/>
        <dbReference type="ChEBI" id="CHEBI:15378"/>
        <dbReference type="ChEBI" id="CHEBI:30013"/>
        <dbReference type="ChEBI" id="CHEBI:30616"/>
        <dbReference type="ChEBI" id="CHEBI:61977"/>
        <dbReference type="ChEBI" id="CHEBI:456216"/>
        <dbReference type="EC" id="2.7.11.1"/>
    </reaction>
</comment>
<comment type="subcellular location">
    <subcellularLocation>
        <location evidence="1">Cell membrane</location>
        <topology evidence="1">Single-pass type I membrane protein</topology>
    </subcellularLocation>
</comment>
<comment type="alternative products">
    <event type="alternative splicing"/>
    <isoform>
        <id>Q9FX99-1</id>
        <name>1</name>
        <sequence type="displayed"/>
    </isoform>
    <isoform>
        <id>Q9FX99-2</id>
        <name>2</name>
        <sequence type="described" ref="VSP_040165"/>
    </isoform>
    <isoform>
        <id>Q9FX99-3</id>
        <name>3</name>
        <sequence type="described" ref="VSP_040162 VSP_040163 VSP_040164"/>
    </isoform>
    <isoform>
        <id>Q9FX99-4</id>
        <name>4</name>
        <sequence type="described" ref="VSP_040163 VSP_040164"/>
    </isoform>
</comment>
<comment type="similarity">
    <text evidence="3">Belongs to the protein kinase superfamily. Ser/Thr protein kinase family.</text>
</comment>
<dbReference type="EC" id="2.7.11.1"/>
<dbReference type="EMBL" id="AC011807">
    <property type="protein sequence ID" value="AAG13055.1"/>
    <property type="molecule type" value="Genomic_DNA"/>
</dbReference>
<dbReference type="EMBL" id="CP002684">
    <property type="protein sequence ID" value="AEE32467.1"/>
    <property type="molecule type" value="Genomic_DNA"/>
</dbReference>
<dbReference type="EMBL" id="CP002684">
    <property type="protein sequence ID" value="AEE32468.1"/>
    <property type="molecule type" value="Genomic_DNA"/>
</dbReference>
<dbReference type="EMBL" id="CP002684">
    <property type="protein sequence ID" value="AEE32469.1"/>
    <property type="molecule type" value="Genomic_DNA"/>
</dbReference>
<dbReference type="EMBL" id="AK316917">
    <property type="protein sequence ID" value="BAH19622.1"/>
    <property type="molecule type" value="mRNA"/>
</dbReference>
<dbReference type="EMBL" id="BT029772">
    <property type="protein sequence ID" value="ABM06042.1"/>
    <property type="molecule type" value="mRNA"/>
</dbReference>
<dbReference type="EMBL" id="BX813719">
    <property type="status" value="NOT_ANNOTATED_CDS"/>
    <property type="molecule type" value="mRNA"/>
</dbReference>
<dbReference type="PIR" id="H96533">
    <property type="entry name" value="H96533"/>
</dbReference>
<dbReference type="RefSeq" id="NP_001031164.1">
    <molecule id="Q9FX99-2"/>
    <property type="nucleotide sequence ID" value="NM_001036087.2"/>
</dbReference>
<dbReference type="RefSeq" id="NP_564552.1">
    <molecule id="Q9FX99-4"/>
    <property type="nucleotide sequence ID" value="NM_103860.3"/>
</dbReference>
<dbReference type="RefSeq" id="NP_973997.1">
    <molecule id="Q9FX99-3"/>
    <property type="nucleotide sequence ID" value="NM_202268.3"/>
</dbReference>
<dbReference type="SMR" id="Q9FX99"/>
<dbReference type="BioGRID" id="26621">
    <property type="interactions" value="2"/>
</dbReference>
<dbReference type="FunCoup" id="Q9FX99">
    <property type="interactions" value="288"/>
</dbReference>
<dbReference type="IntAct" id="Q9FX99">
    <property type="interactions" value="2"/>
</dbReference>
<dbReference type="STRING" id="3702.Q9FX99"/>
<dbReference type="GlyGen" id="Q9FX99">
    <property type="glycosylation" value="5 sites"/>
</dbReference>
<dbReference type="iPTMnet" id="Q9FX99"/>
<dbReference type="PaxDb" id="3702-AT1G49730.1"/>
<dbReference type="ProteomicsDB" id="242419">
    <molecule id="Q9FX99-1"/>
</dbReference>
<dbReference type="EnsemblPlants" id="AT1G49730.2">
    <molecule id="Q9FX99-4"/>
    <property type="protein sequence ID" value="AT1G49730.2"/>
    <property type="gene ID" value="AT1G49730"/>
</dbReference>
<dbReference type="EnsemblPlants" id="AT1G49730.3">
    <molecule id="Q9FX99-3"/>
    <property type="protein sequence ID" value="AT1G49730.3"/>
    <property type="gene ID" value="AT1G49730"/>
</dbReference>
<dbReference type="EnsemblPlants" id="AT1G49730.4">
    <molecule id="Q9FX99-2"/>
    <property type="protein sequence ID" value="AT1G49730.4"/>
    <property type="gene ID" value="AT1G49730"/>
</dbReference>
<dbReference type="GeneID" id="841396"/>
<dbReference type="Gramene" id="AT1G49730.2">
    <molecule id="Q9FX99-4"/>
    <property type="protein sequence ID" value="AT1G49730.2"/>
    <property type="gene ID" value="AT1G49730"/>
</dbReference>
<dbReference type="Gramene" id="AT1G49730.3">
    <molecule id="Q9FX99-3"/>
    <property type="protein sequence ID" value="AT1G49730.3"/>
    <property type="gene ID" value="AT1G49730"/>
</dbReference>
<dbReference type="Gramene" id="AT1G49730.4">
    <molecule id="Q9FX99-2"/>
    <property type="protein sequence ID" value="AT1G49730.4"/>
    <property type="gene ID" value="AT1G49730"/>
</dbReference>
<dbReference type="KEGG" id="ath:AT1G49730"/>
<dbReference type="Araport" id="AT1G49730"/>
<dbReference type="TAIR" id="AT1G49730"/>
<dbReference type="eggNOG" id="KOG1187">
    <property type="taxonomic scope" value="Eukaryota"/>
</dbReference>
<dbReference type="InParanoid" id="Q9FX99"/>
<dbReference type="OMA" id="VTCKRCL"/>
<dbReference type="PhylomeDB" id="Q9FX99"/>
<dbReference type="PRO" id="PR:Q9FX99"/>
<dbReference type="Proteomes" id="UP000006548">
    <property type="component" value="Chromosome 1"/>
</dbReference>
<dbReference type="ExpressionAtlas" id="Q9FX99">
    <property type="expression patterns" value="baseline and differential"/>
</dbReference>
<dbReference type="GO" id="GO:0005886">
    <property type="term" value="C:plasma membrane"/>
    <property type="evidence" value="ECO:0007669"/>
    <property type="project" value="UniProtKB-SubCell"/>
</dbReference>
<dbReference type="GO" id="GO:0005524">
    <property type="term" value="F:ATP binding"/>
    <property type="evidence" value="ECO:0007669"/>
    <property type="project" value="UniProtKB-KW"/>
</dbReference>
<dbReference type="GO" id="GO:0106310">
    <property type="term" value="F:protein serine kinase activity"/>
    <property type="evidence" value="ECO:0007669"/>
    <property type="project" value="RHEA"/>
</dbReference>
<dbReference type="GO" id="GO:0004674">
    <property type="term" value="F:protein serine/threonine kinase activity"/>
    <property type="evidence" value="ECO:0007669"/>
    <property type="project" value="UniProtKB-KW"/>
</dbReference>
<dbReference type="CDD" id="cd14066">
    <property type="entry name" value="STKc_IRAK"/>
    <property type="match status" value="1"/>
</dbReference>
<dbReference type="FunFam" id="1.10.510.10:FF:000381">
    <property type="entry name" value="Putative receptor-like protein kinase"/>
    <property type="match status" value="1"/>
</dbReference>
<dbReference type="FunFam" id="3.30.200.20:FF:000420">
    <property type="entry name" value="Putative receptor-like protein kinase"/>
    <property type="match status" value="1"/>
</dbReference>
<dbReference type="Gene3D" id="3.30.200.20">
    <property type="entry name" value="Phosphorylase Kinase, domain 1"/>
    <property type="match status" value="1"/>
</dbReference>
<dbReference type="Gene3D" id="1.10.510.10">
    <property type="entry name" value="Transferase(Phosphotransferase) domain 1"/>
    <property type="match status" value="1"/>
</dbReference>
<dbReference type="InterPro" id="IPR011009">
    <property type="entry name" value="Kinase-like_dom_sf"/>
</dbReference>
<dbReference type="InterPro" id="IPR000719">
    <property type="entry name" value="Prot_kinase_dom"/>
</dbReference>
<dbReference type="InterPro" id="IPR017441">
    <property type="entry name" value="Protein_kinase_ATP_BS"/>
</dbReference>
<dbReference type="InterPro" id="IPR008271">
    <property type="entry name" value="Ser/Thr_kinase_AS"/>
</dbReference>
<dbReference type="InterPro" id="IPR043891">
    <property type="entry name" value="SPARK"/>
</dbReference>
<dbReference type="PANTHER" id="PTHR47989">
    <property type="entry name" value="OS01G0750732 PROTEIN"/>
    <property type="match status" value="1"/>
</dbReference>
<dbReference type="PANTHER" id="PTHR47989:SF36">
    <property type="entry name" value="PROTEIN KINASE DOMAIN-CONTAINING PROTEIN"/>
    <property type="match status" value="1"/>
</dbReference>
<dbReference type="Pfam" id="PF00069">
    <property type="entry name" value="Pkinase"/>
    <property type="match status" value="1"/>
</dbReference>
<dbReference type="Pfam" id="PF19160">
    <property type="entry name" value="SPARK"/>
    <property type="match status" value="1"/>
</dbReference>
<dbReference type="SMART" id="SM00220">
    <property type="entry name" value="S_TKc"/>
    <property type="match status" value="1"/>
</dbReference>
<dbReference type="SUPFAM" id="SSF56112">
    <property type="entry name" value="Protein kinase-like (PK-like)"/>
    <property type="match status" value="1"/>
</dbReference>
<dbReference type="PROSITE" id="PS00107">
    <property type="entry name" value="PROTEIN_KINASE_ATP"/>
    <property type="match status" value="1"/>
</dbReference>
<dbReference type="PROSITE" id="PS50011">
    <property type="entry name" value="PROTEIN_KINASE_DOM"/>
    <property type="match status" value="1"/>
</dbReference>
<dbReference type="PROSITE" id="PS00108">
    <property type="entry name" value="PROTEIN_KINASE_ST"/>
    <property type="match status" value="1"/>
</dbReference>
<evidence type="ECO:0000250" key="1"/>
<evidence type="ECO:0000255" key="2"/>
<evidence type="ECO:0000255" key="3">
    <source>
        <dbReference type="PROSITE-ProRule" id="PRU00159"/>
    </source>
</evidence>
<evidence type="ECO:0000255" key="4">
    <source>
        <dbReference type="PROSITE-ProRule" id="PRU10027"/>
    </source>
</evidence>
<evidence type="ECO:0000256" key="5">
    <source>
        <dbReference type="SAM" id="MobiDB-lite"/>
    </source>
</evidence>
<evidence type="ECO:0000303" key="6">
    <source>
    </source>
</evidence>
<evidence type="ECO:0000303" key="7">
    <source ref="4"/>
</evidence>
<protein>
    <recommendedName>
        <fullName>Probable receptor-like protein kinase At1g49730</fullName>
        <ecNumber>2.7.11.1</ecNumber>
    </recommendedName>
</protein>